<comment type="function">
    <text evidence="1">Involved in the efflux of sugars. The physiological role may be the reduction of the intracellular concentration of toxic sugars or sugar metabolites.</text>
</comment>
<comment type="subcellular location">
    <subcellularLocation>
        <location evidence="1">Cell inner membrane</location>
        <topology evidence="1">Multi-pass membrane protein</topology>
    </subcellularLocation>
</comment>
<comment type="similarity">
    <text evidence="1">Belongs to the major facilitator superfamily. SotB (TC 2.A.1.2) family.</text>
</comment>
<gene>
    <name evidence="1" type="primary">sotB</name>
    <name type="ordered locus">SBO_1646</name>
</gene>
<protein>
    <recommendedName>
        <fullName evidence="1">Probable sugar efflux transporter</fullName>
    </recommendedName>
</protein>
<reference key="1">
    <citation type="journal article" date="2005" name="Nucleic Acids Res.">
        <title>Genome dynamics and diversity of Shigella species, the etiologic agents of bacillary dysentery.</title>
        <authorList>
            <person name="Yang F."/>
            <person name="Yang J."/>
            <person name="Zhang X."/>
            <person name="Chen L."/>
            <person name="Jiang Y."/>
            <person name="Yan Y."/>
            <person name="Tang X."/>
            <person name="Wang J."/>
            <person name="Xiong Z."/>
            <person name="Dong J."/>
            <person name="Xue Y."/>
            <person name="Zhu Y."/>
            <person name="Xu X."/>
            <person name="Sun L."/>
            <person name="Chen S."/>
            <person name="Nie H."/>
            <person name="Peng J."/>
            <person name="Xu J."/>
            <person name="Wang Y."/>
            <person name="Yuan Z."/>
            <person name="Wen Y."/>
            <person name="Yao Z."/>
            <person name="Shen Y."/>
            <person name="Qiang B."/>
            <person name="Hou Y."/>
            <person name="Yu J."/>
            <person name="Jin Q."/>
        </authorList>
    </citation>
    <scope>NUCLEOTIDE SEQUENCE [LARGE SCALE GENOMIC DNA]</scope>
    <source>
        <strain>Sb227</strain>
    </source>
</reference>
<proteinExistence type="inferred from homology"/>
<dbReference type="EMBL" id="CP000036">
    <property type="protein sequence ID" value="ABB66254.1"/>
    <property type="molecule type" value="Genomic_DNA"/>
</dbReference>
<dbReference type="SMR" id="Q320K4"/>
<dbReference type="KEGG" id="sbo:SBO_1646"/>
<dbReference type="HOGENOM" id="CLU_001265_61_1_6"/>
<dbReference type="Proteomes" id="UP000007067">
    <property type="component" value="Chromosome"/>
</dbReference>
<dbReference type="GO" id="GO:0005886">
    <property type="term" value="C:plasma membrane"/>
    <property type="evidence" value="ECO:0007669"/>
    <property type="project" value="UniProtKB-SubCell"/>
</dbReference>
<dbReference type="GO" id="GO:0015144">
    <property type="term" value="F:carbohydrate transmembrane transporter activity"/>
    <property type="evidence" value="ECO:0007669"/>
    <property type="project" value="UniProtKB-UniRule"/>
</dbReference>
<dbReference type="CDD" id="cd17324">
    <property type="entry name" value="MFS_NepI_like"/>
    <property type="match status" value="1"/>
</dbReference>
<dbReference type="FunFam" id="1.20.1250.20:FF:000079">
    <property type="entry name" value="Probable sugar efflux transporter"/>
    <property type="match status" value="1"/>
</dbReference>
<dbReference type="Gene3D" id="1.20.1250.20">
    <property type="entry name" value="MFS general substrate transporter like domains"/>
    <property type="match status" value="1"/>
</dbReference>
<dbReference type="HAMAP" id="MF_00517">
    <property type="entry name" value="MFS_SotB"/>
    <property type="match status" value="1"/>
</dbReference>
<dbReference type="InterPro" id="IPR011701">
    <property type="entry name" value="MFS"/>
</dbReference>
<dbReference type="InterPro" id="IPR020846">
    <property type="entry name" value="MFS_dom"/>
</dbReference>
<dbReference type="InterPro" id="IPR050189">
    <property type="entry name" value="MFS_Efflux_Transporters"/>
</dbReference>
<dbReference type="InterPro" id="IPR036259">
    <property type="entry name" value="MFS_trans_sf"/>
</dbReference>
<dbReference type="InterPro" id="IPR023495">
    <property type="entry name" value="Sugar_effux_transptr_put"/>
</dbReference>
<dbReference type="NCBIfam" id="NF002921">
    <property type="entry name" value="PRK03545.1"/>
    <property type="match status" value="1"/>
</dbReference>
<dbReference type="PANTHER" id="PTHR43124">
    <property type="entry name" value="PURINE EFFLUX PUMP PBUE"/>
    <property type="match status" value="1"/>
</dbReference>
<dbReference type="PANTHER" id="PTHR43124:SF4">
    <property type="entry name" value="SUGAR EFFLUX TRANSPORTER"/>
    <property type="match status" value="1"/>
</dbReference>
<dbReference type="Pfam" id="PF07690">
    <property type="entry name" value="MFS_1"/>
    <property type="match status" value="1"/>
</dbReference>
<dbReference type="SUPFAM" id="SSF103473">
    <property type="entry name" value="MFS general substrate transporter"/>
    <property type="match status" value="1"/>
</dbReference>
<dbReference type="PROSITE" id="PS50850">
    <property type="entry name" value="MFS"/>
    <property type="match status" value="1"/>
</dbReference>
<name>SOTB_SHIBS</name>
<evidence type="ECO:0000255" key="1">
    <source>
        <dbReference type="HAMAP-Rule" id="MF_00517"/>
    </source>
</evidence>
<organism>
    <name type="scientific">Shigella boydii serotype 4 (strain Sb227)</name>
    <dbReference type="NCBI Taxonomy" id="300268"/>
    <lineage>
        <taxon>Bacteria</taxon>
        <taxon>Pseudomonadati</taxon>
        <taxon>Pseudomonadota</taxon>
        <taxon>Gammaproteobacteria</taxon>
        <taxon>Enterobacterales</taxon>
        <taxon>Enterobacteriaceae</taxon>
        <taxon>Shigella</taxon>
    </lineage>
</organism>
<accession>Q320K4</accession>
<sequence length="396" mass="42538">MTTNTVSRKVAWLRVVTLAVAAFIFNTTEFVPVGLLSDIAQSFHMQTAQVGIMLTIYAWVVALMSLPFMLMTSQVERRKLLICLFVVFIASHVLSFLSWSFTVLVISRIGVAFAHAIFWSITASLAIRMAPAGKRAQALSLIATGTALAMVLGLPLGRIVGQYFGWRMTFFAIGIGALITLLCLIKLLPLLPSEHSGSLKSLPLLFRRPALMSIYLLTVVVVTAHYTAYSYIEPFVQNIAGFSANFATALLLLLGGAGIIGSVIFGKLGNQYASALVSTAIALLLVCLALLLPAANSEIHLGVLSIFWGIAMMIIGLGMQVKVLALAPDATDVAMALFSGIFNIGIGAGALVGNQVSLHWSMSMIGYVGAVPAFAALIWSIIIFRRWPVTLEEQTQ</sequence>
<keyword id="KW-0997">Cell inner membrane</keyword>
<keyword id="KW-1003">Cell membrane</keyword>
<keyword id="KW-0472">Membrane</keyword>
<keyword id="KW-0762">Sugar transport</keyword>
<keyword id="KW-0812">Transmembrane</keyword>
<keyword id="KW-1133">Transmembrane helix</keyword>
<keyword id="KW-0813">Transport</keyword>
<feature type="chain" id="PRO_0000259257" description="Probable sugar efflux transporter">
    <location>
        <begin position="1"/>
        <end position="396"/>
    </location>
</feature>
<feature type="transmembrane region" description="Helical" evidence="1">
    <location>
        <begin position="15"/>
        <end position="35"/>
    </location>
</feature>
<feature type="transmembrane region" description="Helical" evidence="1">
    <location>
        <begin position="50"/>
        <end position="70"/>
    </location>
</feature>
<feature type="transmembrane region" description="Helical" evidence="1">
    <location>
        <begin position="81"/>
        <end position="101"/>
    </location>
</feature>
<feature type="transmembrane region" description="Helical" evidence="1">
    <location>
        <begin position="103"/>
        <end position="123"/>
    </location>
</feature>
<feature type="transmembrane region" description="Helical" evidence="1">
    <location>
        <begin position="136"/>
        <end position="156"/>
    </location>
</feature>
<feature type="transmembrane region" description="Helical" evidence="1">
    <location>
        <begin position="170"/>
        <end position="190"/>
    </location>
</feature>
<feature type="transmembrane region" description="Helical" evidence="1">
    <location>
        <begin position="209"/>
        <end position="229"/>
    </location>
</feature>
<feature type="transmembrane region" description="Helical" evidence="1">
    <location>
        <begin position="246"/>
        <end position="266"/>
    </location>
</feature>
<feature type="transmembrane region" description="Helical" evidence="1">
    <location>
        <begin position="275"/>
        <end position="295"/>
    </location>
</feature>
<feature type="transmembrane region" description="Helical" evidence="1">
    <location>
        <begin position="299"/>
        <end position="319"/>
    </location>
</feature>
<feature type="transmembrane region" description="Helical" evidence="1">
    <location>
        <begin position="333"/>
        <end position="353"/>
    </location>
</feature>
<feature type="transmembrane region" description="Helical" evidence="1">
    <location>
        <begin position="364"/>
        <end position="384"/>
    </location>
</feature>